<reference key="1">
    <citation type="journal article" date="2008" name="Antimicrob. Agents Chemother.">
        <title>Mutated response regulator graR is responsible for phenotypic conversion of Staphylococcus aureus from heterogeneous vancomycin-intermediate resistance to vancomycin-intermediate resistance.</title>
        <authorList>
            <person name="Neoh H.-M."/>
            <person name="Cui L."/>
            <person name="Yuzawa H."/>
            <person name="Takeuchi F."/>
            <person name="Matsuo M."/>
            <person name="Hiramatsu K."/>
        </authorList>
    </citation>
    <scope>NUCLEOTIDE SEQUENCE [LARGE SCALE GENOMIC DNA]</scope>
    <source>
        <strain>Mu3 / ATCC 700698</strain>
    </source>
</reference>
<gene>
    <name evidence="1" type="primary">recU</name>
    <name type="ordered locus">SAHV_1437</name>
</gene>
<keyword id="KW-0963">Cytoplasm</keyword>
<keyword id="KW-0227">DNA damage</keyword>
<keyword id="KW-0233">DNA recombination</keyword>
<keyword id="KW-0234">DNA repair</keyword>
<keyword id="KW-0255">Endonuclease</keyword>
<keyword id="KW-0378">Hydrolase</keyword>
<keyword id="KW-0460">Magnesium</keyword>
<keyword id="KW-0479">Metal-binding</keyword>
<keyword id="KW-0540">Nuclease</keyword>
<comment type="function">
    <text evidence="1">Endonuclease that resolves Holliday junction intermediates in genetic recombination. Cleaves mobile four-strand junctions by introducing symmetrical nicks in paired strands. Promotes annealing of linear ssDNA with homologous dsDNA. Required for DNA repair, homologous recombination and chromosome segregation.</text>
</comment>
<comment type="catalytic activity">
    <reaction evidence="1">
        <text>Endonucleolytic cleavage at a junction such as a reciprocal single-stranded crossover between two homologous DNA duplexes (Holliday junction).</text>
        <dbReference type="EC" id="3.1.21.10"/>
    </reaction>
</comment>
<comment type="cofactor">
    <cofactor evidence="1">
        <name>Mg(2+)</name>
        <dbReference type="ChEBI" id="CHEBI:18420"/>
    </cofactor>
    <text evidence="1">Binds 1 Mg(2+) ion per subunit.</text>
</comment>
<comment type="subcellular location">
    <subcellularLocation>
        <location evidence="1">Cytoplasm</location>
    </subcellularLocation>
</comment>
<comment type="similarity">
    <text evidence="1">Belongs to the RecU family.</text>
</comment>
<evidence type="ECO:0000255" key="1">
    <source>
        <dbReference type="HAMAP-Rule" id="MF_00130"/>
    </source>
</evidence>
<name>RECU_STAA1</name>
<accession>A7X2E3</accession>
<organism>
    <name type="scientific">Staphylococcus aureus (strain Mu3 / ATCC 700698)</name>
    <dbReference type="NCBI Taxonomy" id="418127"/>
    <lineage>
        <taxon>Bacteria</taxon>
        <taxon>Bacillati</taxon>
        <taxon>Bacillota</taxon>
        <taxon>Bacilli</taxon>
        <taxon>Bacillales</taxon>
        <taxon>Staphylococcaceae</taxon>
        <taxon>Staphylococcus</taxon>
    </lineage>
</organism>
<feature type="chain" id="PRO_1000016739" description="Holliday junction resolvase RecU">
    <location>
        <begin position="1"/>
        <end position="208"/>
    </location>
</feature>
<feature type="binding site" evidence="1">
    <location>
        <position position="87"/>
    </location>
    <ligand>
        <name>Mg(2+)</name>
        <dbReference type="ChEBI" id="CHEBI:18420"/>
    </ligand>
</feature>
<feature type="binding site" evidence="1">
    <location>
        <position position="89"/>
    </location>
    <ligand>
        <name>Mg(2+)</name>
        <dbReference type="ChEBI" id="CHEBI:18420"/>
    </ligand>
</feature>
<feature type="binding site" evidence="1">
    <location>
        <position position="102"/>
    </location>
    <ligand>
        <name>Mg(2+)</name>
        <dbReference type="ChEBI" id="CHEBI:18420"/>
    </ligand>
</feature>
<feature type="binding site" evidence="1">
    <location>
        <position position="121"/>
    </location>
    <ligand>
        <name>Mg(2+)</name>
        <dbReference type="ChEBI" id="CHEBI:18420"/>
    </ligand>
</feature>
<feature type="site" description="Transition state stabilizer" evidence="1">
    <location>
        <position position="104"/>
    </location>
</feature>
<sequence>MNYPNGKPYRKNSAIDGGKKTAAFSNIEYGGRGMSLEKDIEHSNTFYLKSDIAVIHKKPTPVQIVNVNYPKRSKAVINEAYFRTPSTTDYNGVYQGYYIDFEAKETKNKTSFPLNNIHDHQVEHMKNAYQQKGIVFLMIRFKTLDEVYLLPYSKFEVFWKRYKDNIKKSITVDEIRKNGYHIPYQYQPRLDYLKAVDKLILDESEDRV</sequence>
<dbReference type="EC" id="3.1.21.10" evidence="1"/>
<dbReference type="EMBL" id="AP009324">
    <property type="protein sequence ID" value="BAF78320.1"/>
    <property type="molecule type" value="Genomic_DNA"/>
</dbReference>
<dbReference type="RefSeq" id="WP_001108889.1">
    <property type="nucleotide sequence ID" value="NC_009782.1"/>
</dbReference>
<dbReference type="SMR" id="A7X2E3"/>
<dbReference type="KEGG" id="saw:SAHV_1437"/>
<dbReference type="HOGENOM" id="CLU_096340_0_0_9"/>
<dbReference type="GO" id="GO:0005737">
    <property type="term" value="C:cytoplasm"/>
    <property type="evidence" value="ECO:0007669"/>
    <property type="project" value="UniProtKB-SubCell"/>
</dbReference>
<dbReference type="GO" id="GO:0004519">
    <property type="term" value="F:endonuclease activity"/>
    <property type="evidence" value="ECO:0007669"/>
    <property type="project" value="UniProtKB-UniRule"/>
</dbReference>
<dbReference type="GO" id="GO:0000287">
    <property type="term" value="F:magnesium ion binding"/>
    <property type="evidence" value="ECO:0007669"/>
    <property type="project" value="UniProtKB-UniRule"/>
</dbReference>
<dbReference type="GO" id="GO:0003676">
    <property type="term" value="F:nucleic acid binding"/>
    <property type="evidence" value="ECO:0007669"/>
    <property type="project" value="InterPro"/>
</dbReference>
<dbReference type="GO" id="GO:0007059">
    <property type="term" value="P:chromosome segregation"/>
    <property type="evidence" value="ECO:0007669"/>
    <property type="project" value="UniProtKB-UniRule"/>
</dbReference>
<dbReference type="GO" id="GO:0006310">
    <property type="term" value="P:DNA recombination"/>
    <property type="evidence" value="ECO:0007669"/>
    <property type="project" value="UniProtKB-UniRule"/>
</dbReference>
<dbReference type="GO" id="GO:0006281">
    <property type="term" value="P:DNA repair"/>
    <property type="evidence" value="ECO:0007669"/>
    <property type="project" value="UniProtKB-UniRule"/>
</dbReference>
<dbReference type="CDD" id="cd22354">
    <property type="entry name" value="RecU-like"/>
    <property type="match status" value="1"/>
</dbReference>
<dbReference type="Gene3D" id="3.40.1350.10">
    <property type="match status" value="1"/>
</dbReference>
<dbReference type="HAMAP" id="MF_00130">
    <property type="entry name" value="RecU"/>
    <property type="match status" value="1"/>
</dbReference>
<dbReference type="InterPro" id="IPR004612">
    <property type="entry name" value="Resolv_RecU"/>
</dbReference>
<dbReference type="InterPro" id="IPR011335">
    <property type="entry name" value="Restrct_endonuc-II-like"/>
</dbReference>
<dbReference type="InterPro" id="IPR011856">
    <property type="entry name" value="tRNA_endonuc-like_dom_sf"/>
</dbReference>
<dbReference type="NCBIfam" id="NF002581">
    <property type="entry name" value="PRK02234.1-2"/>
    <property type="match status" value="1"/>
</dbReference>
<dbReference type="NCBIfam" id="NF002583">
    <property type="entry name" value="PRK02234.1-4"/>
    <property type="match status" value="1"/>
</dbReference>
<dbReference type="NCBIfam" id="NF002584">
    <property type="entry name" value="PRK02234.1-5"/>
    <property type="match status" value="1"/>
</dbReference>
<dbReference type="NCBIfam" id="TIGR00648">
    <property type="entry name" value="recU"/>
    <property type="match status" value="1"/>
</dbReference>
<dbReference type="Pfam" id="PF03838">
    <property type="entry name" value="RecU"/>
    <property type="match status" value="1"/>
</dbReference>
<dbReference type="PIRSF" id="PIRSF037785">
    <property type="entry name" value="RecU"/>
    <property type="match status" value="1"/>
</dbReference>
<dbReference type="SUPFAM" id="SSF52980">
    <property type="entry name" value="Restriction endonuclease-like"/>
    <property type="match status" value="1"/>
</dbReference>
<proteinExistence type="inferred from homology"/>
<protein>
    <recommendedName>
        <fullName evidence="1">Holliday junction resolvase RecU</fullName>
        <ecNumber evidence="1">3.1.21.10</ecNumber>
    </recommendedName>
    <alternativeName>
        <fullName evidence="1">Recombination protein U homolog</fullName>
    </alternativeName>
</protein>